<name>TBD2B_XENTR</name>
<protein>
    <recommendedName>
        <fullName>TBC1 domain family member 2B</fullName>
    </recommendedName>
</protein>
<evidence type="ECO:0000250" key="1">
    <source>
        <dbReference type="UniProtKB" id="Q9UPU7"/>
    </source>
</evidence>
<evidence type="ECO:0000255" key="2"/>
<evidence type="ECO:0000255" key="3">
    <source>
        <dbReference type="PROSITE-ProRule" id="PRU00145"/>
    </source>
</evidence>
<evidence type="ECO:0000255" key="4">
    <source>
        <dbReference type="PROSITE-ProRule" id="PRU00163"/>
    </source>
</evidence>
<evidence type="ECO:0000256" key="5">
    <source>
        <dbReference type="SAM" id="MobiDB-lite"/>
    </source>
</evidence>
<comment type="function">
    <text evidence="1">GTPase-activating protein that plays a role in the early steps of endocytosis.</text>
</comment>
<comment type="subcellular location">
    <subcellularLocation>
        <location evidence="1">Early endosome</location>
    </subcellularLocation>
</comment>
<keyword id="KW-0175">Coiled coil</keyword>
<keyword id="KW-0967">Endosome</keyword>
<keyword id="KW-0343">GTPase activation</keyword>
<keyword id="KW-1185">Reference proteome</keyword>
<sequence>MPGVEDPCDSQGTPPEEPSTSVAPGEAAKEQSPRLCGYLAKLSGKGPLRSFKNRWFVLDPRKCQFYYFKHHQDAQPLGQIDIGDASFSYDLEAEEGQFEIHSAGRVSILRAPSRHAMTYWLQELQQKRWEYCNSFGALKRESVINPASTKVPIGLVARESPDYMGIPNINDAERARNQFAVETCPSVLGDQTSAEQASNNPAAVQVLLRQWSNDIRSSMQHLRPGKSSDCRKSTFYTNEEWELLNPTPKELEESLLHVEKRKPPTEGIKGSTGMSFPFDFGRIPQRARRPLREIMGVNKNRTECLADSLPVSDSRMESDVLLKLQSQEEELERLKKDLLSQKELVRLLQQSLRSSQYDKYFASPFCDGLSKEHLHLLQQKDTQIQELNHLLERQTLEKDHLHQEVEELKCSVKELKDQLNMMMETIQAKDEVIMRLSRQLSKYEQHTPSSTVAAEIPVAPQLEELNRLQDSLQGYKAQNTFLNKEILELSALRRNAERREREMEARYSNLEAKMCQIESKYLVLLQEMKTPVCSDDQGTAREFVNQLLEDALKVENAEQPEHTFVKPHTVSKYDIHGFLIVPEDDEEEEKLVAKVRALDLKTLSLTENQEISNVVKWDNYFASTVNREMACSPELKALVRNGIPHEHRSRMWKWFTNLHIKKLKDEAAPGYFQSLLQNALEKQNPASKQIELDLMRTLPNNKHYTSPTSEGIQKLRNVLLAYSWRNPDIGYCQGINRLAAIALLYLDQEDAFWCLVTIVEAFMPRDYYTKTLLGSQVDQRVFKDLMNEKLPRLCAHFEQYKVDYTLITFNWFLVVFVDSVVSDILFRIWDSLLYEGSKVIFRFALGLFKYKEEEILKLQDSMSIFKYLRYFSRTILDARKLCNIAFVDMNPFPLRQIRNRRTYHLEKVRLELSELEAIRADFIRERETNPERRDLISDDEEDS</sequence>
<feature type="chain" id="PRO_0000315715" description="TBC1 domain family member 2B">
    <location>
        <begin position="1"/>
        <end position="943"/>
    </location>
</feature>
<feature type="domain" description="PH" evidence="3">
    <location>
        <begin position="32"/>
        <end position="129"/>
    </location>
</feature>
<feature type="domain" description="Rab-GAP TBC" evidence="4">
    <location>
        <begin position="642"/>
        <end position="836"/>
    </location>
</feature>
<feature type="region of interest" description="Disordered" evidence="5">
    <location>
        <begin position="1"/>
        <end position="29"/>
    </location>
</feature>
<feature type="coiled-coil region" evidence="2">
    <location>
        <begin position="315"/>
        <end position="514"/>
    </location>
</feature>
<feature type="compositionally biased region" description="Polar residues" evidence="5">
    <location>
        <begin position="10"/>
        <end position="22"/>
    </location>
</feature>
<accession>Q28CB1</accession>
<proteinExistence type="evidence at transcript level"/>
<gene>
    <name type="primary">tbc1d2b</name>
    <name type="ORF">TGas126k13.1</name>
</gene>
<reference key="1">
    <citation type="submission" date="2006-10" db="EMBL/GenBank/DDBJ databases">
        <authorList>
            <consortium name="Sanger Xenopus tropicalis EST/cDNA project"/>
        </authorList>
    </citation>
    <scope>NUCLEOTIDE SEQUENCE [LARGE SCALE MRNA]</scope>
    <source>
        <tissue>Gastrula</tissue>
    </source>
</reference>
<reference key="2">
    <citation type="submission" date="2006-08" db="EMBL/GenBank/DDBJ databases">
        <authorList>
            <consortium name="NIH - Xenopus Gene Collection (XGC) project"/>
        </authorList>
    </citation>
    <scope>NUCLEOTIDE SEQUENCE [LARGE SCALE MRNA]</scope>
    <source>
        <tissue>Testis</tissue>
    </source>
</reference>
<dbReference type="EMBL" id="CR942358">
    <property type="protein sequence ID" value="CAJ81581.1"/>
    <property type="molecule type" value="mRNA"/>
</dbReference>
<dbReference type="EMBL" id="BC121891">
    <property type="protein sequence ID" value="AAI21892.1"/>
    <property type="molecule type" value="mRNA"/>
</dbReference>
<dbReference type="RefSeq" id="NP_001039198.1">
    <property type="nucleotide sequence ID" value="NM_001045733.1"/>
</dbReference>
<dbReference type="SMR" id="Q28CB1"/>
<dbReference type="FunCoup" id="Q28CB1">
    <property type="interactions" value="1297"/>
</dbReference>
<dbReference type="STRING" id="8364.ENSXETP00000050373"/>
<dbReference type="PaxDb" id="8364-ENSXETP00000021491"/>
<dbReference type="GeneID" id="734055"/>
<dbReference type="KEGG" id="xtr:734055"/>
<dbReference type="AGR" id="Xenbase:XB-GENE-5932742"/>
<dbReference type="CTD" id="23102"/>
<dbReference type="Xenbase" id="XB-GENE-5932742">
    <property type="gene designation" value="tbc1d2b"/>
</dbReference>
<dbReference type="eggNOG" id="KOG2058">
    <property type="taxonomic scope" value="Eukaryota"/>
</dbReference>
<dbReference type="InParanoid" id="Q28CB1"/>
<dbReference type="OrthoDB" id="294251at2759"/>
<dbReference type="Proteomes" id="UP000008143">
    <property type="component" value="Chromosome 3"/>
</dbReference>
<dbReference type="GO" id="GO:0005769">
    <property type="term" value="C:early endosome"/>
    <property type="evidence" value="ECO:0007669"/>
    <property type="project" value="UniProtKB-SubCell"/>
</dbReference>
<dbReference type="GO" id="GO:0005096">
    <property type="term" value="F:GTPase activator activity"/>
    <property type="evidence" value="ECO:0007669"/>
    <property type="project" value="UniProtKB-KW"/>
</dbReference>
<dbReference type="CDD" id="cd01265">
    <property type="entry name" value="PH_TBC1D2A"/>
    <property type="match status" value="1"/>
</dbReference>
<dbReference type="FunFam" id="1.10.8.270:FF:000014">
    <property type="entry name" value="Putative TBC1 domain family member 2B"/>
    <property type="match status" value="1"/>
</dbReference>
<dbReference type="FunFam" id="2.30.29.30:FF:000248">
    <property type="entry name" value="TBC1 domain family member 2A isoform X1"/>
    <property type="match status" value="1"/>
</dbReference>
<dbReference type="FunFam" id="1.10.472.80:FF:000018">
    <property type="entry name" value="TBC1 domain family member 2B"/>
    <property type="match status" value="1"/>
</dbReference>
<dbReference type="Gene3D" id="1.10.287.1490">
    <property type="match status" value="1"/>
</dbReference>
<dbReference type="Gene3D" id="2.30.29.30">
    <property type="entry name" value="Pleckstrin-homology domain (PH domain)/Phosphotyrosine-binding domain (PTB)"/>
    <property type="match status" value="1"/>
</dbReference>
<dbReference type="Gene3D" id="1.10.8.270">
    <property type="entry name" value="putative rabgap domain of human tbc1 domain family member 14 like domains"/>
    <property type="match status" value="1"/>
</dbReference>
<dbReference type="Gene3D" id="1.10.472.80">
    <property type="entry name" value="Ypt/Rab-GAP domain of gyp1p, domain 3"/>
    <property type="match status" value="1"/>
</dbReference>
<dbReference type="InterPro" id="IPR011993">
    <property type="entry name" value="PH-like_dom_sf"/>
</dbReference>
<dbReference type="InterPro" id="IPR001849">
    <property type="entry name" value="PH_domain"/>
</dbReference>
<dbReference type="InterPro" id="IPR000195">
    <property type="entry name" value="Rab-GAP-TBC_dom"/>
</dbReference>
<dbReference type="InterPro" id="IPR035969">
    <property type="entry name" value="Rab-GAP_TBC_sf"/>
</dbReference>
<dbReference type="InterPro" id="IPR050302">
    <property type="entry name" value="Rab_GAP_TBC_domain"/>
</dbReference>
<dbReference type="PANTHER" id="PTHR47219">
    <property type="entry name" value="RAB GTPASE-ACTIVATING PROTEIN 1-LIKE"/>
    <property type="match status" value="1"/>
</dbReference>
<dbReference type="PANTHER" id="PTHR47219:SF20">
    <property type="entry name" value="TBC1 DOMAIN FAMILY MEMBER 2B"/>
    <property type="match status" value="1"/>
</dbReference>
<dbReference type="Pfam" id="PF00169">
    <property type="entry name" value="PH"/>
    <property type="match status" value="1"/>
</dbReference>
<dbReference type="Pfam" id="PF00566">
    <property type="entry name" value="RabGAP-TBC"/>
    <property type="match status" value="1"/>
</dbReference>
<dbReference type="SMART" id="SM00233">
    <property type="entry name" value="PH"/>
    <property type="match status" value="1"/>
</dbReference>
<dbReference type="SMART" id="SM00164">
    <property type="entry name" value="TBC"/>
    <property type="match status" value="1"/>
</dbReference>
<dbReference type="SUPFAM" id="SSF50729">
    <property type="entry name" value="PH domain-like"/>
    <property type="match status" value="1"/>
</dbReference>
<dbReference type="SUPFAM" id="SSF47923">
    <property type="entry name" value="Ypt/Rab-GAP domain of gyp1p"/>
    <property type="match status" value="2"/>
</dbReference>
<dbReference type="PROSITE" id="PS50003">
    <property type="entry name" value="PH_DOMAIN"/>
    <property type="match status" value="1"/>
</dbReference>
<dbReference type="PROSITE" id="PS50086">
    <property type="entry name" value="TBC_RABGAP"/>
    <property type="match status" value="1"/>
</dbReference>
<organism>
    <name type="scientific">Xenopus tropicalis</name>
    <name type="common">Western clawed frog</name>
    <name type="synonym">Silurana tropicalis</name>
    <dbReference type="NCBI Taxonomy" id="8364"/>
    <lineage>
        <taxon>Eukaryota</taxon>
        <taxon>Metazoa</taxon>
        <taxon>Chordata</taxon>
        <taxon>Craniata</taxon>
        <taxon>Vertebrata</taxon>
        <taxon>Euteleostomi</taxon>
        <taxon>Amphibia</taxon>
        <taxon>Batrachia</taxon>
        <taxon>Anura</taxon>
        <taxon>Pipoidea</taxon>
        <taxon>Pipidae</taxon>
        <taxon>Xenopodinae</taxon>
        <taxon>Xenopus</taxon>
        <taxon>Silurana</taxon>
    </lineage>
</organism>